<reference key="1">
    <citation type="submission" date="2005-04" db="EMBL/GenBank/DDBJ databases">
        <title>Characterization of cysteine- and glycine-rich protein 3 (CSRP3) in Korean cattle.</title>
        <authorList>
            <person name="Yu S.L."/>
            <person name="Chung H.J."/>
            <person name="Jung K.C."/>
            <person name="Lee Y.J."/>
            <person name="Lee J.H."/>
            <person name="Yoon D.H."/>
            <person name="Lee S.H."/>
            <person name="Sang B.C."/>
        </authorList>
    </citation>
    <scope>NUCLEOTIDE SEQUENCE [MRNA]</scope>
    <source>
        <strain>Korean</strain>
        <tissue>Skeletal muscle</tissue>
    </source>
</reference>
<reference key="2">
    <citation type="submission" date="2005-08" db="EMBL/GenBank/DDBJ databases">
        <authorList>
            <consortium name="NIH - Mammalian Gene Collection (MGC) project"/>
        </authorList>
    </citation>
    <scope>NUCLEOTIDE SEQUENCE [LARGE SCALE MRNA]</scope>
    <source>
        <strain>Hereford</strain>
        <tissue>Rumen</tissue>
    </source>
</reference>
<accession>Q4U0T9</accession>
<protein>
    <recommendedName>
        <fullName>Cysteine and glycine-rich protein 3</fullName>
    </recommendedName>
    <alternativeName>
        <fullName>Cysteine-rich protein 3</fullName>
        <shortName>CRP3</shortName>
    </alternativeName>
</protein>
<keyword id="KW-0009">Actin-binding</keyword>
<keyword id="KW-0963">Cytoplasm</keyword>
<keyword id="KW-0206">Cytoskeleton</keyword>
<keyword id="KW-0217">Developmental protein</keyword>
<keyword id="KW-0221">Differentiation</keyword>
<keyword id="KW-0440">LIM domain</keyword>
<keyword id="KW-0479">Metal-binding</keyword>
<keyword id="KW-0517">Myogenesis</keyword>
<keyword id="KW-0539">Nucleus</keyword>
<keyword id="KW-0597">Phosphoprotein</keyword>
<keyword id="KW-1185">Reference proteome</keyword>
<keyword id="KW-0677">Repeat</keyword>
<keyword id="KW-0804">Transcription</keyword>
<keyword id="KW-0805">Transcription regulation</keyword>
<keyword id="KW-0862">Zinc</keyword>
<evidence type="ECO:0000250" key="1">
    <source>
        <dbReference type="UniProtKB" id="P50461"/>
    </source>
</evidence>
<evidence type="ECO:0000250" key="2">
    <source>
        <dbReference type="UniProtKB" id="P50462"/>
    </source>
</evidence>
<evidence type="ECO:0000250" key="3">
    <source>
        <dbReference type="UniProtKB" id="P50463"/>
    </source>
</evidence>
<evidence type="ECO:0000255" key="4"/>
<evidence type="ECO:0000255" key="5">
    <source>
        <dbReference type="PROSITE-ProRule" id="PRU00125"/>
    </source>
</evidence>
<evidence type="ECO:0000305" key="6"/>
<proteinExistence type="evidence at transcript level"/>
<dbReference type="EMBL" id="DQ022067">
    <property type="protein sequence ID" value="AAY45897.1"/>
    <property type="molecule type" value="mRNA"/>
</dbReference>
<dbReference type="EMBL" id="BC103108">
    <property type="protein sequence ID" value="AAI03109.1"/>
    <property type="molecule type" value="mRNA"/>
</dbReference>
<dbReference type="RefSeq" id="NP_001019860.1">
    <property type="nucleotide sequence ID" value="NM_001024689.3"/>
</dbReference>
<dbReference type="FunCoup" id="Q4U0T9">
    <property type="interactions" value="46"/>
</dbReference>
<dbReference type="STRING" id="9913.ENSBTAP00000030304"/>
<dbReference type="PaxDb" id="9913-ENSBTAP00000030304"/>
<dbReference type="Ensembl" id="ENSBTAT00000030320.3">
    <property type="protein sequence ID" value="ENSBTAP00000030304.1"/>
    <property type="gene ID" value="ENSBTAG00000011869.5"/>
</dbReference>
<dbReference type="GeneID" id="540407"/>
<dbReference type="KEGG" id="bta:540407"/>
<dbReference type="CTD" id="8048"/>
<dbReference type="VEuPathDB" id="HostDB:ENSBTAG00000011869"/>
<dbReference type="VGNC" id="VGNC:27775">
    <property type="gene designation" value="CSRP3"/>
</dbReference>
<dbReference type="eggNOG" id="KOG1700">
    <property type="taxonomic scope" value="Eukaryota"/>
</dbReference>
<dbReference type="GeneTree" id="ENSGT00940000159533"/>
<dbReference type="HOGENOM" id="CLU_054591_1_1_1"/>
<dbReference type="InParanoid" id="Q4U0T9"/>
<dbReference type="OMA" id="TCYGRRY"/>
<dbReference type="OrthoDB" id="8062037at2759"/>
<dbReference type="TreeFam" id="TF313758"/>
<dbReference type="Proteomes" id="UP000009136">
    <property type="component" value="Chromosome 29"/>
</dbReference>
<dbReference type="Bgee" id="ENSBTAG00000011869">
    <property type="expression patterns" value="Expressed in cardiac ventricle and 71 other cell types or tissues"/>
</dbReference>
<dbReference type="GO" id="GO:0005737">
    <property type="term" value="C:cytoplasm"/>
    <property type="evidence" value="ECO:0000318"/>
    <property type="project" value="GO_Central"/>
</dbReference>
<dbReference type="GO" id="GO:0005856">
    <property type="term" value="C:cytoskeleton"/>
    <property type="evidence" value="ECO:0007669"/>
    <property type="project" value="UniProtKB-SubCell"/>
</dbReference>
<dbReference type="GO" id="GO:0005829">
    <property type="term" value="C:cytosol"/>
    <property type="evidence" value="ECO:0007669"/>
    <property type="project" value="Ensembl"/>
</dbReference>
<dbReference type="GO" id="GO:0005654">
    <property type="term" value="C:nucleoplasm"/>
    <property type="evidence" value="ECO:0007669"/>
    <property type="project" value="Ensembl"/>
</dbReference>
<dbReference type="GO" id="GO:0005634">
    <property type="term" value="C:nucleus"/>
    <property type="evidence" value="ECO:0000318"/>
    <property type="project" value="GO_Central"/>
</dbReference>
<dbReference type="GO" id="GO:0030018">
    <property type="term" value="C:Z disc"/>
    <property type="evidence" value="ECO:0000318"/>
    <property type="project" value="GO_Central"/>
</dbReference>
<dbReference type="GO" id="GO:0003779">
    <property type="term" value="F:actin binding"/>
    <property type="evidence" value="ECO:0007669"/>
    <property type="project" value="UniProtKB-KW"/>
</dbReference>
<dbReference type="GO" id="GO:0042805">
    <property type="term" value="F:actinin binding"/>
    <property type="evidence" value="ECO:0000318"/>
    <property type="project" value="GO_Central"/>
</dbReference>
<dbReference type="GO" id="GO:0042802">
    <property type="term" value="F:identical protein binding"/>
    <property type="evidence" value="ECO:0007669"/>
    <property type="project" value="Ensembl"/>
</dbReference>
<dbReference type="GO" id="GO:0046872">
    <property type="term" value="F:metal ion binding"/>
    <property type="evidence" value="ECO:0007669"/>
    <property type="project" value="UniProtKB-KW"/>
</dbReference>
<dbReference type="GO" id="GO:0008307">
    <property type="term" value="F:structural constituent of muscle"/>
    <property type="evidence" value="ECO:0000318"/>
    <property type="project" value="GO_Central"/>
</dbReference>
<dbReference type="GO" id="GO:0031433">
    <property type="term" value="F:telethonin binding"/>
    <property type="evidence" value="ECO:0007669"/>
    <property type="project" value="Ensembl"/>
</dbReference>
<dbReference type="GO" id="GO:0060048">
    <property type="term" value="P:cardiac muscle contraction"/>
    <property type="evidence" value="ECO:0000318"/>
    <property type="project" value="GO_Central"/>
</dbReference>
<dbReference type="GO" id="GO:0003300">
    <property type="term" value="P:cardiac muscle hypertrophy"/>
    <property type="evidence" value="ECO:0007669"/>
    <property type="project" value="Ensembl"/>
</dbReference>
<dbReference type="GO" id="GO:0055003">
    <property type="term" value="P:cardiac myofibril assembly"/>
    <property type="evidence" value="ECO:0007669"/>
    <property type="project" value="Ensembl"/>
</dbReference>
<dbReference type="GO" id="GO:0035995">
    <property type="term" value="P:detection of muscle stretch"/>
    <property type="evidence" value="ECO:0007669"/>
    <property type="project" value="Ensembl"/>
</dbReference>
<dbReference type="GO" id="GO:0042593">
    <property type="term" value="P:glucose homeostasis"/>
    <property type="evidence" value="ECO:0007669"/>
    <property type="project" value="Ensembl"/>
</dbReference>
<dbReference type="GO" id="GO:0006954">
    <property type="term" value="P:inflammatory response"/>
    <property type="evidence" value="ECO:0007669"/>
    <property type="project" value="Ensembl"/>
</dbReference>
<dbReference type="GO" id="GO:0008286">
    <property type="term" value="P:insulin receptor signaling pathway"/>
    <property type="evidence" value="ECO:0007669"/>
    <property type="project" value="Ensembl"/>
</dbReference>
<dbReference type="GO" id="GO:0006874">
    <property type="term" value="P:intracellular calcium ion homeostasis"/>
    <property type="evidence" value="ECO:0007669"/>
    <property type="project" value="Ensembl"/>
</dbReference>
<dbReference type="GO" id="GO:0046716">
    <property type="term" value="P:muscle cell cellular homeostasis"/>
    <property type="evidence" value="ECO:0007669"/>
    <property type="project" value="Ensembl"/>
</dbReference>
<dbReference type="GO" id="GO:0007517">
    <property type="term" value="P:muscle organ development"/>
    <property type="evidence" value="ECO:0007669"/>
    <property type="project" value="UniProtKB-KW"/>
</dbReference>
<dbReference type="GO" id="GO:0060537">
    <property type="term" value="P:muscle tissue development"/>
    <property type="evidence" value="ECO:0000318"/>
    <property type="project" value="GO_Central"/>
</dbReference>
<dbReference type="GO" id="GO:0141212">
    <property type="term" value="P:phospholipase C/protein kinase C signal transduction"/>
    <property type="evidence" value="ECO:0007669"/>
    <property type="project" value="Ensembl"/>
</dbReference>
<dbReference type="GO" id="GO:0045944">
    <property type="term" value="P:positive regulation of transcription by RNA polymerase II"/>
    <property type="evidence" value="ECO:0007669"/>
    <property type="project" value="Ensembl"/>
</dbReference>
<dbReference type="GO" id="GO:0033365">
    <property type="term" value="P:protein localization to organelle"/>
    <property type="evidence" value="ECO:0007669"/>
    <property type="project" value="Ensembl"/>
</dbReference>
<dbReference type="GO" id="GO:1903076">
    <property type="term" value="P:regulation of protein localization to plasma membrane"/>
    <property type="evidence" value="ECO:0007669"/>
    <property type="project" value="Ensembl"/>
</dbReference>
<dbReference type="GO" id="GO:0002026">
    <property type="term" value="P:regulation of the force of heart contraction"/>
    <property type="evidence" value="ECO:0007669"/>
    <property type="project" value="Ensembl"/>
</dbReference>
<dbReference type="GO" id="GO:0045214">
    <property type="term" value="P:sarcomere organization"/>
    <property type="evidence" value="ECO:0000318"/>
    <property type="project" value="GO_Central"/>
</dbReference>
<dbReference type="GO" id="GO:0033292">
    <property type="term" value="P:T-tubule organization"/>
    <property type="evidence" value="ECO:0007669"/>
    <property type="project" value="Ensembl"/>
</dbReference>
<dbReference type="CDD" id="cd09481">
    <property type="entry name" value="LIM1_CRP3"/>
    <property type="match status" value="1"/>
</dbReference>
<dbReference type="CDD" id="cd09482">
    <property type="entry name" value="LIM2_CRP3"/>
    <property type="match status" value="1"/>
</dbReference>
<dbReference type="FunFam" id="2.10.110.10:FF:000001">
    <property type="entry name" value="Cysteine and glycine-rich protein 1"/>
    <property type="match status" value="2"/>
</dbReference>
<dbReference type="Gene3D" id="2.10.110.10">
    <property type="entry name" value="Cysteine Rich Protein"/>
    <property type="match status" value="2"/>
</dbReference>
<dbReference type="InterPro" id="IPR001781">
    <property type="entry name" value="Znf_LIM"/>
</dbReference>
<dbReference type="PANTHER" id="PTHR24215:SF1">
    <property type="entry name" value="CYSTEINE AND GLYCINE-RICH PROTEIN 3"/>
    <property type="match status" value="1"/>
</dbReference>
<dbReference type="PANTHER" id="PTHR24215">
    <property type="entry name" value="RHO-GTPASE-ACTIVATING PROTEIN LRG1"/>
    <property type="match status" value="1"/>
</dbReference>
<dbReference type="Pfam" id="PF00412">
    <property type="entry name" value="LIM"/>
    <property type="match status" value="2"/>
</dbReference>
<dbReference type="SMART" id="SM00132">
    <property type="entry name" value="LIM"/>
    <property type="match status" value="2"/>
</dbReference>
<dbReference type="SUPFAM" id="SSF57716">
    <property type="entry name" value="Glucocorticoid receptor-like (DNA-binding domain)"/>
    <property type="match status" value="4"/>
</dbReference>
<dbReference type="PROSITE" id="PS00478">
    <property type="entry name" value="LIM_DOMAIN_1"/>
    <property type="match status" value="2"/>
</dbReference>
<dbReference type="PROSITE" id="PS50023">
    <property type="entry name" value="LIM_DOMAIN_2"/>
    <property type="match status" value="2"/>
</dbReference>
<sequence length="194" mass="20953">MPNWGGGAKCGACEKTVYHAEEIQCNGRSFHKTCFHCMACRKALDSTTVAAHESEIYCKVCYGRRYGPKGIGYGQGAGCLSTDTGEHLGLQFQQSPKQARSATTSSNPSKFAKFGESEKCPRCGKSVYAAEKVMGGGKPWHKTCFRCAICGKSLESTNVTDKDGELYCKVCYAKNFGPTGIGFGGLTHQVEKKD</sequence>
<organism>
    <name type="scientific">Bos taurus</name>
    <name type="common">Bovine</name>
    <dbReference type="NCBI Taxonomy" id="9913"/>
    <lineage>
        <taxon>Eukaryota</taxon>
        <taxon>Metazoa</taxon>
        <taxon>Chordata</taxon>
        <taxon>Craniata</taxon>
        <taxon>Vertebrata</taxon>
        <taxon>Euteleostomi</taxon>
        <taxon>Mammalia</taxon>
        <taxon>Eutheria</taxon>
        <taxon>Laurasiatheria</taxon>
        <taxon>Artiodactyla</taxon>
        <taxon>Ruminantia</taxon>
        <taxon>Pecora</taxon>
        <taxon>Bovidae</taxon>
        <taxon>Bovinae</taxon>
        <taxon>Bos</taxon>
    </lineage>
</organism>
<name>CSRP3_BOVIN</name>
<gene>
    <name type="primary">CSRP3</name>
</gene>
<comment type="function">
    <text evidence="1 2">Positive regulator of myogenesis. Acts as a cofactor for myogenic bHLH transcription factors such as MYOD1, and probably MYOG and MYF6. Enhances the DNA-binding activity of the MYOD1:TCF3 isoform E47 complex and may promote formation of a functional MYOD1:TCF3 isoform E47:MEF2A complex involved in myogenesis. Plays a crucial and specific role in the organization of cytosolic structures in cardiomyocytes. Could play a role in mechanical stretch sensing. May be a scaffold protein that promotes the assembly of interacting proteins at Z-line structures. It is essential for calcineurin anchorage to the Z line. Required for stress-induced calcineurin-NFAT activation. The role in regulation of cytoskeleton dynamics by association with CFL2 is reported conflictingly. Proposed to contribute to the maintenance of muscle cell integrity through an actin-based mechanism. Can directly bind to actin filaments, cross-link actin filaments into bundles without polarity selectivity and protect them from dilution- and cofilin-mediated depolymerization; the function seems to involve its self-association. In vitro can inhibit PKC/PRKCA activity. Proposed to be involved in cardiac stress signaling by down-regulating excessive PKC/PRKCA signaling (By similarity).</text>
</comment>
<comment type="subunit">
    <text evidence="1 2 3">Self-associates. Oligomeric in the cytoplasm and monomeric in the nucleus. Homooligomers preferentially form along the actin cytoskeleton. Interacts with TCAP, LDHD, MYOD1, MYOG, ACTN2, NRAP, MYF6. Interacts (via N-terminus) with GLRX3 (via C-terminus) and PPP3CA; GLRX3 and calcineurin compete for interaction with CSRP3. Interacts with CFL2; the stoichiometry influences F-actin depolymerization and possibly two molecules of CFL2 can interact with one molecule of CSRP3 resulting in the highest functional impact; the interaction is stronger with phosphorylated CFL2 (By similarity).</text>
</comment>
<comment type="subcellular location">
    <subcellularLocation>
        <location evidence="3">Nucleus</location>
    </subcellularLocation>
    <subcellularLocation>
        <location evidence="6">Cytoplasm</location>
        <location evidence="6">Cytoskeleton</location>
    </subcellularLocation>
    <subcellularLocation>
        <location evidence="3">Cytoplasm</location>
    </subcellularLocation>
    <subcellularLocation>
        <location evidence="2">Cytoplasm</location>
        <location evidence="2">Myofibril</location>
        <location evidence="2">Sarcomere</location>
        <location evidence="2">Z line</location>
    </subcellularLocation>
    <subcellularLocation>
        <location evidence="1">Cytoplasm</location>
        <location evidence="1">Myofibril</location>
        <location evidence="1">Sarcomere</location>
    </subcellularLocation>
    <text evidence="2 3">Nucleocytoplasmic shuttling protein. Mainly cytoplasmic. In the Z line, found associated with GLRX3 (via C-terminus) (By similarity).</text>
</comment>
<comment type="domain">
    <text evidence="1 3">LIM zinc-binding domain 1 is required for self-association. LIM zinc-binding domain 1 and LIM zinc-binding domain 2 both are required for optimal actin-bundling activity. LIM zinc-binding domain 1 mediates binding to MYOD1. LIM zinc-binding domain 2 mediates binding to SPTB.</text>
</comment>
<feature type="chain" id="PRO_0000075726" description="Cysteine and glycine-rich protein 3">
    <location>
        <begin position="1"/>
        <end position="194"/>
    </location>
</feature>
<feature type="domain" description="LIM zinc-binding 1" evidence="5">
    <location>
        <begin position="10"/>
        <end position="61"/>
    </location>
</feature>
<feature type="domain" description="LIM zinc-binding 2" evidence="5">
    <location>
        <begin position="120"/>
        <end position="171"/>
    </location>
</feature>
<feature type="region of interest" description="Interaction with TCAP" evidence="1">
    <location>
        <begin position="1"/>
        <end position="5"/>
    </location>
</feature>
<feature type="region of interest" description="Interaction with CLF2" evidence="1">
    <location>
        <begin position="94"/>
        <end position="106"/>
    </location>
</feature>
<feature type="short sequence motif" description="Nuclear localization signal" evidence="3 4">
    <location>
        <begin position="64"/>
        <end position="69"/>
    </location>
</feature>
<feature type="modified residue" description="Phosphoserine" evidence="2">
    <location>
        <position position="95"/>
    </location>
</feature>
<feature type="modified residue" description="Phosphoserine" evidence="3">
    <location>
        <position position="153"/>
    </location>
</feature>